<comment type="function">
    <text evidence="1">DNA-dependent RNA polymerase catalyzes the transcription of DNA into RNA using the four ribonucleoside triphosphates as substrates.</text>
</comment>
<comment type="catalytic activity">
    <reaction evidence="1">
        <text>RNA(n) + a ribonucleoside 5'-triphosphate = RNA(n+1) + diphosphate</text>
        <dbReference type="Rhea" id="RHEA:21248"/>
        <dbReference type="Rhea" id="RHEA-COMP:14527"/>
        <dbReference type="Rhea" id="RHEA-COMP:17342"/>
        <dbReference type="ChEBI" id="CHEBI:33019"/>
        <dbReference type="ChEBI" id="CHEBI:61557"/>
        <dbReference type="ChEBI" id="CHEBI:140395"/>
        <dbReference type="EC" id="2.7.7.6"/>
    </reaction>
</comment>
<comment type="cofactor">
    <cofactor evidence="1">
        <name>Mg(2+)</name>
        <dbReference type="ChEBI" id="CHEBI:18420"/>
    </cofactor>
    <text evidence="1">Binds 1 Mg(2+) ion per subunit.</text>
</comment>
<comment type="cofactor">
    <cofactor evidence="1">
        <name>Zn(2+)</name>
        <dbReference type="ChEBI" id="CHEBI:29105"/>
    </cofactor>
    <text evidence="1">Binds 2 Zn(2+) ions per subunit.</text>
</comment>
<comment type="subunit">
    <text evidence="1">The RNAP catalytic core consists of 2 alpha, 1 beta, 1 beta' and 1 omega subunit. When a sigma factor is associated with the core the holoenzyme is formed, which can initiate transcription.</text>
</comment>
<comment type="similarity">
    <text evidence="1">Belongs to the RNA polymerase beta' chain family.</text>
</comment>
<evidence type="ECO:0000255" key="1">
    <source>
        <dbReference type="HAMAP-Rule" id="MF_01322"/>
    </source>
</evidence>
<accession>A9MHE9</accession>
<feature type="chain" id="PRO_0000353427" description="DNA-directed RNA polymerase subunit beta'">
    <location>
        <begin position="1"/>
        <end position="1407"/>
    </location>
</feature>
<feature type="binding site" evidence="1">
    <location>
        <position position="70"/>
    </location>
    <ligand>
        <name>Zn(2+)</name>
        <dbReference type="ChEBI" id="CHEBI:29105"/>
        <label>1</label>
    </ligand>
</feature>
<feature type="binding site" evidence="1">
    <location>
        <position position="72"/>
    </location>
    <ligand>
        <name>Zn(2+)</name>
        <dbReference type="ChEBI" id="CHEBI:29105"/>
        <label>1</label>
    </ligand>
</feature>
<feature type="binding site" evidence="1">
    <location>
        <position position="85"/>
    </location>
    <ligand>
        <name>Zn(2+)</name>
        <dbReference type="ChEBI" id="CHEBI:29105"/>
        <label>1</label>
    </ligand>
</feature>
<feature type="binding site" evidence="1">
    <location>
        <position position="88"/>
    </location>
    <ligand>
        <name>Zn(2+)</name>
        <dbReference type="ChEBI" id="CHEBI:29105"/>
        <label>1</label>
    </ligand>
</feature>
<feature type="binding site" evidence="1">
    <location>
        <position position="460"/>
    </location>
    <ligand>
        <name>Mg(2+)</name>
        <dbReference type="ChEBI" id="CHEBI:18420"/>
    </ligand>
</feature>
<feature type="binding site" evidence="1">
    <location>
        <position position="462"/>
    </location>
    <ligand>
        <name>Mg(2+)</name>
        <dbReference type="ChEBI" id="CHEBI:18420"/>
    </ligand>
</feature>
<feature type="binding site" evidence="1">
    <location>
        <position position="464"/>
    </location>
    <ligand>
        <name>Mg(2+)</name>
        <dbReference type="ChEBI" id="CHEBI:18420"/>
    </ligand>
</feature>
<feature type="binding site" evidence="1">
    <location>
        <position position="814"/>
    </location>
    <ligand>
        <name>Zn(2+)</name>
        <dbReference type="ChEBI" id="CHEBI:29105"/>
        <label>2</label>
    </ligand>
</feature>
<feature type="binding site" evidence="1">
    <location>
        <position position="888"/>
    </location>
    <ligand>
        <name>Zn(2+)</name>
        <dbReference type="ChEBI" id="CHEBI:29105"/>
        <label>2</label>
    </ligand>
</feature>
<feature type="binding site" evidence="1">
    <location>
        <position position="895"/>
    </location>
    <ligand>
        <name>Zn(2+)</name>
        <dbReference type="ChEBI" id="CHEBI:29105"/>
        <label>2</label>
    </ligand>
</feature>
<feature type="binding site" evidence="1">
    <location>
        <position position="898"/>
    </location>
    <ligand>
        <name>Zn(2+)</name>
        <dbReference type="ChEBI" id="CHEBI:29105"/>
        <label>2</label>
    </ligand>
</feature>
<gene>
    <name evidence="1" type="primary">rpoC</name>
    <name type="ordered locus">SARI_03508</name>
</gene>
<keyword id="KW-0240">DNA-directed RNA polymerase</keyword>
<keyword id="KW-0460">Magnesium</keyword>
<keyword id="KW-0479">Metal-binding</keyword>
<keyword id="KW-0548">Nucleotidyltransferase</keyword>
<keyword id="KW-1185">Reference proteome</keyword>
<keyword id="KW-0804">Transcription</keyword>
<keyword id="KW-0808">Transferase</keyword>
<keyword id="KW-0862">Zinc</keyword>
<protein>
    <recommendedName>
        <fullName evidence="1">DNA-directed RNA polymerase subunit beta'</fullName>
        <shortName evidence="1">RNAP subunit beta'</shortName>
        <ecNumber evidence="1">2.7.7.6</ecNumber>
    </recommendedName>
    <alternativeName>
        <fullName evidence="1">RNA polymerase subunit beta'</fullName>
    </alternativeName>
    <alternativeName>
        <fullName evidence="1">Transcriptase subunit beta'</fullName>
    </alternativeName>
</protein>
<organism>
    <name type="scientific">Salmonella arizonae (strain ATCC BAA-731 / CDC346-86 / RSK2980)</name>
    <dbReference type="NCBI Taxonomy" id="41514"/>
    <lineage>
        <taxon>Bacteria</taxon>
        <taxon>Pseudomonadati</taxon>
        <taxon>Pseudomonadota</taxon>
        <taxon>Gammaproteobacteria</taxon>
        <taxon>Enterobacterales</taxon>
        <taxon>Enterobacteriaceae</taxon>
        <taxon>Salmonella</taxon>
    </lineage>
</organism>
<name>RPOC_SALAR</name>
<sequence>MKDLLKFLKAQTKTEEFDAIKIALASPDMIRSWSFGEVKKPETINYRTFKPERDGLFCARIFGPVKDYECLCGKYKRLKHRGVICEKCGVEVTQTKVRRERMGHIELASPTAHIWFLKSLPSRIGLLLDMPLRDIERVLYFESYVVIEGGMTNLERQQILTEEQYLDALEEFGDEFDAKMGAEAIQALLKSMDLEQECETLREELNETNSETKRKKLTKRIKLLEAFVQSGNKPEWMILTVLPVLPPDLRPLVPLDGGRFATSDLNDLYRRVINRNNRLKRLLDLAAPDIIVRNEKRMLQEAVDALLDNGRRGRAITGSNKRPLKSLADMIKGKQGRFRQNLLGKRVDYSGRSVITVGPYLRLHQCGLPKKMALELFKPFIYGKLELRGLATTIKAAKKMVEREEAVVWDILDEVIREHPVLLNRAPTLHRLGIQAFEPVLIEGKAIQLHPLVCAAYNADFDGDQMAVHVPLTLEAQLEARALMMSTNNILSPANGEPIIVPSQDVVLGLYYMTRDCVNAKGEGMVLTGPKEAERIYRAGLASLHARVKVRITEYEKDENGEFVATTSLKDTTVGRAILWMIVPKGLPFSIVNQALGKKAISKMLNTCYRILGLKPTVIFADQTMYTGFAYAARSGASVGIDDMVIPEKKHEIISEAEAEVAEIQEQFQSGLVTAGERYNKVIDIWAAANDRVSKAMMDNLQTETVINRDGQEEQQVSFNSIYMMADSGARGSAAQIRQLAGMRGLMAKPDGSIIETPITANFREGLNVLQYFISTHGARKGLADTALKTANSGYLTRRLVDVAQDLVVTEDDCGTHEGILMTPVIEGGDVKEPLRDRVLGRVTAEDVLKPGTADILVPRNTLLHEQWCDLLEANSVDAVKVRSVVSCDTDFGVCAHCYGRDLARGHIINKGEAIGVIAAQSIGEPGTQLTMRTFHIGGAASRAAAESSIQVKNKGSIKLSNVKSVVNSSGKLVITSRNTELKLLDEFGRTKESYKVPYGAVMAKGDGEQVAGGETVANWDPHTMPVITEVSGFIRFTDMIDGQTITRQTDELTGLSSLVVLDSAERTTGGKDLRPALKIVDAQGNDVLIPGTDMPAQYFLPGKAIVQLEDGVQISSGDTLARIPQESGGTKDITGGLPRVADLFEARRPKEPAILAEIAGIVSFGKETKGKRRLVITPVDGSDPYEEMIPKWRQLNVFEGERVERGDVISDGPEAPHDILRLRGVHAVTRYIVNEVQDVYRLQGVKINDKHIEVIVRQMLRKATIESAGSSDFLEGEQVEYSRVKIANRELEANGKVGATFSRDLLGITKASLATESFISAASFQETTRVLTEAAVAGKRDELRGLKENVIVGRLIPAGTGYAYHQDRMRRRAAGEQPATPQVTAEDASASLAELLNAGLGGSDNE</sequence>
<proteinExistence type="inferred from homology"/>
<dbReference type="EC" id="2.7.7.6" evidence="1"/>
<dbReference type="EMBL" id="CP000880">
    <property type="protein sequence ID" value="ABX23333.1"/>
    <property type="molecule type" value="Genomic_DNA"/>
</dbReference>
<dbReference type="SMR" id="A9MHE9"/>
<dbReference type="STRING" id="41514.SARI_03508"/>
<dbReference type="KEGG" id="ses:SARI_03508"/>
<dbReference type="HOGENOM" id="CLU_000524_3_1_6"/>
<dbReference type="Proteomes" id="UP000002084">
    <property type="component" value="Chromosome"/>
</dbReference>
<dbReference type="GO" id="GO:0000428">
    <property type="term" value="C:DNA-directed RNA polymerase complex"/>
    <property type="evidence" value="ECO:0007669"/>
    <property type="project" value="UniProtKB-KW"/>
</dbReference>
<dbReference type="GO" id="GO:0003677">
    <property type="term" value="F:DNA binding"/>
    <property type="evidence" value="ECO:0007669"/>
    <property type="project" value="UniProtKB-UniRule"/>
</dbReference>
<dbReference type="GO" id="GO:0003899">
    <property type="term" value="F:DNA-directed RNA polymerase activity"/>
    <property type="evidence" value="ECO:0007669"/>
    <property type="project" value="UniProtKB-UniRule"/>
</dbReference>
<dbReference type="GO" id="GO:0000287">
    <property type="term" value="F:magnesium ion binding"/>
    <property type="evidence" value="ECO:0007669"/>
    <property type="project" value="UniProtKB-UniRule"/>
</dbReference>
<dbReference type="GO" id="GO:0008270">
    <property type="term" value="F:zinc ion binding"/>
    <property type="evidence" value="ECO:0007669"/>
    <property type="project" value="UniProtKB-UniRule"/>
</dbReference>
<dbReference type="GO" id="GO:0006351">
    <property type="term" value="P:DNA-templated transcription"/>
    <property type="evidence" value="ECO:0007669"/>
    <property type="project" value="UniProtKB-UniRule"/>
</dbReference>
<dbReference type="CDD" id="cd02655">
    <property type="entry name" value="RNAP_beta'_C"/>
    <property type="match status" value="1"/>
</dbReference>
<dbReference type="CDD" id="cd01609">
    <property type="entry name" value="RNAP_beta'_N"/>
    <property type="match status" value="1"/>
</dbReference>
<dbReference type="FunFam" id="1.10.132.30:FF:000003">
    <property type="entry name" value="DNA-directed RNA polymerase subunit beta"/>
    <property type="match status" value="1"/>
</dbReference>
<dbReference type="FunFam" id="1.10.150.390:FF:000002">
    <property type="entry name" value="DNA-directed RNA polymerase subunit beta"/>
    <property type="match status" value="1"/>
</dbReference>
<dbReference type="FunFam" id="1.10.274.100:FF:000002">
    <property type="entry name" value="DNA-directed RNA polymerase subunit beta"/>
    <property type="match status" value="1"/>
</dbReference>
<dbReference type="FunFam" id="1.10.40.90:FF:000001">
    <property type="entry name" value="DNA-directed RNA polymerase subunit beta"/>
    <property type="match status" value="1"/>
</dbReference>
<dbReference type="FunFam" id="2.40.50.100:FF:000012">
    <property type="entry name" value="DNA-directed RNA polymerase subunit beta"/>
    <property type="match status" value="1"/>
</dbReference>
<dbReference type="FunFam" id="2.40.50.100:FF:000016">
    <property type="entry name" value="DNA-directed RNA polymerase subunit beta"/>
    <property type="match status" value="1"/>
</dbReference>
<dbReference type="FunFam" id="2.40.50.100:FF:000019">
    <property type="entry name" value="DNA-directed RNA polymerase subunit beta"/>
    <property type="match status" value="1"/>
</dbReference>
<dbReference type="FunFam" id="4.10.860.120:FF:000001">
    <property type="entry name" value="DNA-directed RNA polymerase subunit beta"/>
    <property type="match status" value="1"/>
</dbReference>
<dbReference type="Gene3D" id="1.10.132.30">
    <property type="match status" value="1"/>
</dbReference>
<dbReference type="Gene3D" id="1.10.150.390">
    <property type="match status" value="1"/>
</dbReference>
<dbReference type="Gene3D" id="1.10.1790.20">
    <property type="match status" value="1"/>
</dbReference>
<dbReference type="Gene3D" id="1.10.40.90">
    <property type="match status" value="1"/>
</dbReference>
<dbReference type="Gene3D" id="2.40.40.20">
    <property type="match status" value="1"/>
</dbReference>
<dbReference type="Gene3D" id="2.40.50.100">
    <property type="match status" value="3"/>
</dbReference>
<dbReference type="Gene3D" id="4.10.860.120">
    <property type="entry name" value="RNA polymerase II, clamp domain"/>
    <property type="match status" value="1"/>
</dbReference>
<dbReference type="Gene3D" id="1.10.274.100">
    <property type="entry name" value="RNA polymerase Rpb1, domain 3"/>
    <property type="match status" value="2"/>
</dbReference>
<dbReference type="HAMAP" id="MF_01322">
    <property type="entry name" value="RNApol_bact_RpoC"/>
    <property type="match status" value="1"/>
</dbReference>
<dbReference type="InterPro" id="IPR045867">
    <property type="entry name" value="DNA-dir_RpoC_beta_prime"/>
</dbReference>
<dbReference type="InterPro" id="IPR012754">
    <property type="entry name" value="DNA-dir_RpoC_beta_prime_bact"/>
</dbReference>
<dbReference type="InterPro" id="IPR000722">
    <property type="entry name" value="RNA_pol_asu"/>
</dbReference>
<dbReference type="InterPro" id="IPR006592">
    <property type="entry name" value="RNA_pol_N"/>
</dbReference>
<dbReference type="InterPro" id="IPR007080">
    <property type="entry name" value="RNA_pol_Rpb1_1"/>
</dbReference>
<dbReference type="InterPro" id="IPR007066">
    <property type="entry name" value="RNA_pol_Rpb1_3"/>
</dbReference>
<dbReference type="InterPro" id="IPR042102">
    <property type="entry name" value="RNA_pol_Rpb1_3_sf"/>
</dbReference>
<dbReference type="InterPro" id="IPR007083">
    <property type="entry name" value="RNA_pol_Rpb1_4"/>
</dbReference>
<dbReference type="InterPro" id="IPR007081">
    <property type="entry name" value="RNA_pol_Rpb1_5"/>
</dbReference>
<dbReference type="InterPro" id="IPR044893">
    <property type="entry name" value="RNA_pol_Rpb1_clamp_domain"/>
</dbReference>
<dbReference type="InterPro" id="IPR038120">
    <property type="entry name" value="Rpb1_funnel_sf"/>
</dbReference>
<dbReference type="NCBIfam" id="TIGR02386">
    <property type="entry name" value="rpoC_TIGR"/>
    <property type="match status" value="1"/>
</dbReference>
<dbReference type="PANTHER" id="PTHR19376">
    <property type="entry name" value="DNA-DIRECTED RNA POLYMERASE"/>
    <property type="match status" value="1"/>
</dbReference>
<dbReference type="PANTHER" id="PTHR19376:SF54">
    <property type="entry name" value="DNA-DIRECTED RNA POLYMERASE SUBUNIT BETA"/>
    <property type="match status" value="1"/>
</dbReference>
<dbReference type="Pfam" id="PF04997">
    <property type="entry name" value="RNA_pol_Rpb1_1"/>
    <property type="match status" value="1"/>
</dbReference>
<dbReference type="Pfam" id="PF00623">
    <property type="entry name" value="RNA_pol_Rpb1_2"/>
    <property type="match status" value="2"/>
</dbReference>
<dbReference type="Pfam" id="PF04983">
    <property type="entry name" value="RNA_pol_Rpb1_3"/>
    <property type="match status" value="1"/>
</dbReference>
<dbReference type="Pfam" id="PF05000">
    <property type="entry name" value="RNA_pol_Rpb1_4"/>
    <property type="match status" value="1"/>
</dbReference>
<dbReference type="Pfam" id="PF04998">
    <property type="entry name" value="RNA_pol_Rpb1_5"/>
    <property type="match status" value="1"/>
</dbReference>
<dbReference type="SMART" id="SM00663">
    <property type="entry name" value="RPOLA_N"/>
    <property type="match status" value="1"/>
</dbReference>
<dbReference type="SUPFAM" id="SSF64484">
    <property type="entry name" value="beta and beta-prime subunits of DNA dependent RNA-polymerase"/>
    <property type="match status" value="1"/>
</dbReference>
<reference key="1">
    <citation type="submission" date="2007-11" db="EMBL/GenBank/DDBJ databases">
        <authorList>
            <consortium name="The Salmonella enterica serovar Arizonae Genome Sequencing Project"/>
            <person name="McClelland M."/>
            <person name="Sanderson E.K."/>
            <person name="Porwollik S."/>
            <person name="Spieth J."/>
            <person name="Clifton W.S."/>
            <person name="Fulton R."/>
            <person name="Chunyan W."/>
            <person name="Wollam A."/>
            <person name="Shah N."/>
            <person name="Pepin K."/>
            <person name="Bhonagiri V."/>
            <person name="Nash W."/>
            <person name="Johnson M."/>
            <person name="Thiruvilangam P."/>
            <person name="Wilson R."/>
        </authorList>
    </citation>
    <scope>NUCLEOTIDE SEQUENCE [LARGE SCALE GENOMIC DNA]</scope>
    <source>
        <strain>ATCC BAA-731 / CDC346-86 / RSK2980</strain>
    </source>
</reference>